<protein>
    <recommendedName>
        <fullName evidence="1">HPr kinase/phosphorylase</fullName>
        <shortName evidence="1">HPrK/P</shortName>
        <ecNumber evidence="1">2.7.11.-</ecNumber>
        <ecNumber evidence="1">2.7.4.-</ecNumber>
    </recommendedName>
    <alternativeName>
        <fullName evidence="1">HPr(Ser) kinase/phosphorylase</fullName>
    </alternativeName>
</protein>
<proteinExistence type="inferred from homology"/>
<dbReference type="EC" id="2.7.11.-" evidence="1"/>
<dbReference type="EC" id="2.7.4.-" evidence="1"/>
<dbReference type="EMBL" id="CP000885">
    <property type="protein sequence ID" value="ABX40715.1"/>
    <property type="molecule type" value="Genomic_DNA"/>
</dbReference>
<dbReference type="RefSeq" id="WP_012198358.1">
    <property type="nucleotide sequence ID" value="NC_010001.1"/>
</dbReference>
<dbReference type="SMR" id="A9KSS1"/>
<dbReference type="STRING" id="357809.Cphy_0328"/>
<dbReference type="KEGG" id="cpy:Cphy_0328"/>
<dbReference type="eggNOG" id="COG1493">
    <property type="taxonomic scope" value="Bacteria"/>
</dbReference>
<dbReference type="HOGENOM" id="CLU_052030_0_1_9"/>
<dbReference type="OrthoDB" id="9778803at2"/>
<dbReference type="Proteomes" id="UP000000370">
    <property type="component" value="Chromosome"/>
</dbReference>
<dbReference type="GO" id="GO:0005524">
    <property type="term" value="F:ATP binding"/>
    <property type="evidence" value="ECO:0007669"/>
    <property type="project" value="UniProtKB-UniRule"/>
</dbReference>
<dbReference type="GO" id="GO:0000287">
    <property type="term" value="F:magnesium ion binding"/>
    <property type="evidence" value="ECO:0007669"/>
    <property type="project" value="UniProtKB-UniRule"/>
</dbReference>
<dbReference type="GO" id="GO:0000155">
    <property type="term" value="F:phosphorelay sensor kinase activity"/>
    <property type="evidence" value="ECO:0007669"/>
    <property type="project" value="InterPro"/>
</dbReference>
<dbReference type="GO" id="GO:0004674">
    <property type="term" value="F:protein serine/threonine kinase activity"/>
    <property type="evidence" value="ECO:0007669"/>
    <property type="project" value="UniProtKB-KW"/>
</dbReference>
<dbReference type="GO" id="GO:0004712">
    <property type="term" value="F:protein serine/threonine/tyrosine kinase activity"/>
    <property type="evidence" value="ECO:0007669"/>
    <property type="project" value="UniProtKB-UniRule"/>
</dbReference>
<dbReference type="GO" id="GO:0006109">
    <property type="term" value="P:regulation of carbohydrate metabolic process"/>
    <property type="evidence" value="ECO:0007669"/>
    <property type="project" value="UniProtKB-UniRule"/>
</dbReference>
<dbReference type="CDD" id="cd01918">
    <property type="entry name" value="HprK_C"/>
    <property type="match status" value="1"/>
</dbReference>
<dbReference type="FunFam" id="3.40.50.300:FF:000174">
    <property type="entry name" value="HPr kinase/phosphorylase"/>
    <property type="match status" value="1"/>
</dbReference>
<dbReference type="Gene3D" id="3.40.1390.20">
    <property type="entry name" value="HprK N-terminal domain-like"/>
    <property type="match status" value="1"/>
</dbReference>
<dbReference type="Gene3D" id="3.40.50.300">
    <property type="entry name" value="P-loop containing nucleotide triphosphate hydrolases"/>
    <property type="match status" value="1"/>
</dbReference>
<dbReference type="HAMAP" id="MF_01249">
    <property type="entry name" value="HPr_kinase"/>
    <property type="match status" value="1"/>
</dbReference>
<dbReference type="InterPro" id="IPR003755">
    <property type="entry name" value="HPr(Ser)_kin/Pase"/>
</dbReference>
<dbReference type="InterPro" id="IPR011104">
    <property type="entry name" value="Hpr_kin/Pase_C"/>
</dbReference>
<dbReference type="InterPro" id="IPR011126">
    <property type="entry name" value="Hpr_kin/Pase_Hpr_N"/>
</dbReference>
<dbReference type="InterPro" id="IPR027417">
    <property type="entry name" value="P-loop_NTPase"/>
</dbReference>
<dbReference type="InterPro" id="IPR028979">
    <property type="entry name" value="Ser_kin/Pase_Hpr-like_N_sf"/>
</dbReference>
<dbReference type="NCBIfam" id="TIGR00679">
    <property type="entry name" value="hpr-ser"/>
    <property type="match status" value="1"/>
</dbReference>
<dbReference type="PANTHER" id="PTHR30305:SF1">
    <property type="entry name" value="HPR KINASE_PHOSPHORYLASE"/>
    <property type="match status" value="1"/>
</dbReference>
<dbReference type="PANTHER" id="PTHR30305">
    <property type="entry name" value="PROTEIN YJDM-RELATED"/>
    <property type="match status" value="1"/>
</dbReference>
<dbReference type="Pfam" id="PF07475">
    <property type="entry name" value="Hpr_kinase_C"/>
    <property type="match status" value="1"/>
</dbReference>
<dbReference type="Pfam" id="PF02603">
    <property type="entry name" value="Hpr_kinase_N"/>
    <property type="match status" value="1"/>
</dbReference>
<dbReference type="SUPFAM" id="SSF75138">
    <property type="entry name" value="HprK N-terminal domain-like"/>
    <property type="match status" value="1"/>
</dbReference>
<dbReference type="SUPFAM" id="SSF53795">
    <property type="entry name" value="PEP carboxykinase-like"/>
    <property type="match status" value="1"/>
</dbReference>
<accession>A9KSS1</accession>
<organism>
    <name type="scientific">Lachnoclostridium phytofermentans (strain ATCC 700394 / DSM 18823 / ISDg)</name>
    <name type="common">Clostridium phytofermentans</name>
    <dbReference type="NCBI Taxonomy" id="357809"/>
    <lineage>
        <taxon>Bacteria</taxon>
        <taxon>Bacillati</taxon>
        <taxon>Bacillota</taxon>
        <taxon>Clostridia</taxon>
        <taxon>Lachnospirales</taxon>
        <taxon>Lachnospiraceae</taxon>
    </lineage>
</organism>
<sequence length="309" mass="35099">MYTVELGKLVEKMNLENCTPEIDISSIQITQPDVNRPALQLTGFFDYFDSDRVQIIGNVEHAYMQKMEKDHGLGIMKKLMSFKMPCIVFCRGIEVSEDFKEVAIEEGVPIFRTEKTTSSFMAEVIRWLKVELAPRISIHGVLVDVYGEGILIMGESGIGKSEAALELIKRGHRLVTDDLVEIKKVSDDTLIGTAPDITRHFIELRGIGIIDVKTLFGVESVKNTQSIDLVIKLEEWNRDKEYDRLGLEEQYIEFLGNRVVCHNIPIRPGRNLAVICESAAVNYRQKKMGYNAAQELYNRVTNNLLKKSK</sequence>
<evidence type="ECO:0000255" key="1">
    <source>
        <dbReference type="HAMAP-Rule" id="MF_01249"/>
    </source>
</evidence>
<feature type="chain" id="PRO_1000085793" description="HPr kinase/phosphorylase">
    <location>
        <begin position="1"/>
        <end position="309"/>
    </location>
</feature>
<feature type="region of interest" description="Important for the catalytic mechanism of both phosphorylation and dephosphorylation" evidence="1">
    <location>
        <begin position="202"/>
        <end position="211"/>
    </location>
</feature>
<feature type="region of interest" description="Important for the catalytic mechanism of dephosphorylation" evidence="1">
    <location>
        <begin position="265"/>
        <end position="270"/>
    </location>
</feature>
<feature type="active site" evidence="1">
    <location>
        <position position="139"/>
    </location>
</feature>
<feature type="active site" evidence="1">
    <location>
        <position position="160"/>
    </location>
</feature>
<feature type="active site" description="Proton acceptor; for phosphorylation activity. Proton donor; for dephosphorylation activity" evidence="1">
    <location>
        <position position="178"/>
    </location>
</feature>
<feature type="active site" evidence="1">
    <location>
        <position position="244"/>
    </location>
</feature>
<feature type="binding site" evidence="1">
    <location>
        <begin position="154"/>
        <end position="161"/>
    </location>
    <ligand>
        <name>ATP</name>
        <dbReference type="ChEBI" id="CHEBI:30616"/>
    </ligand>
</feature>
<feature type="binding site" evidence="1">
    <location>
        <position position="161"/>
    </location>
    <ligand>
        <name>Mg(2+)</name>
        <dbReference type="ChEBI" id="CHEBI:18420"/>
    </ligand>
</feature>
<feature type="binding site" evidence="1">
    <location>
        <position position="203"/>
    </location>
    <ligand>
        <name>Mg(2+)</name>
        <dbReference type="ChEBI" id="CHEBI:18420"/>
    </ligand>
</feature>
<comment type="function">
    <text evidence="1">Catalyzes the ATP- as well as the pyrophosphate-dependent phosphorylation of a specific serine residue in HPr, a phosphocarrier protein of the phosphoenolpyruvate-dependent sugar phosphotransferase system (PTS). HprK/P also catalyzes the pyrophosphate-producing, inorganic phosphate-dependent dephosphorylation (phosphorolysis) of seryl-phosphorylated HPr (P-Ser-HPr). The two antagonistic activities of HprK/P are regulated by several intracellular metabolites, which change their concentration in response to the absence or presence of rapidly metabolisable carbon sources (glucose, fructose, etc.) in the growth medium. Therefore, by controlling the phosphorylation state of HPr, HPrK/P is a sensor enzyme that plays a major role in the regulation of carbon metabolism and sugar transport: it mediates carbon catabolite repression (CCR), and regulates PTS-catalyzed carbohydrate uptake and inducer exclusion.</text>
</comment>
<comment type="catalytic activity">
    <reaction evidence="1">
        <text>[HPr protein]-L-serine + ATP = [HPr protein]-O-phospho-L-serine + ADP + H(+)</text>
        <dbReference type="Rhea" id="RHEA:46600"/>
        <dbReference type="Rhea" id="RHEA-COMP:11602"/>
        <dbReference type="Rhea" id="RHEA-COMP:11603"/>
        <dbReference type="ChEBI" id="CHEBI:15378"/>
        <dbReference type="ChEBI" id="CHEBI:29999"/>
        <dbReference type="ChEBI" id="CHEBI:30616"/>
        <dbReference type="ChEBI" id="CHEBI:83421"/>
        <dbReference type="ChEBI" id="CHEBI:456216"/>
    </reaction>
</comment>
<comment type="catalytic activity">
    <reaction evidence="1">
        <text>[HPr protein]-O-phospho-L-serine + phosphate + H(+) = [HPr protein]-L-serine + diphosphate</text>
        <dbReference type="Rhea" id="RHEA:46604"/>
        <dbReference type="Rhea" id="RHEA-COMP:11602"/>
        <dbReference type="Rhea" id="RHEA-COMP:11603"/>
        <dbReference type="ChEBI" id="CHEBI:15378"/>
        <dbReference type="ChEBI" id="CHEBI:29999"/>
        <dbReference type="ChEBI" id="CHEBI:33019"/>
        <dbReference type="ChEBI" id="CHEBI:43474"/>
        <dbReference type="ChEBI" id="CHEBI:83421"/>
    </reaction>
</comment>
<comment type="cofactor">
    <cofactor evidence="1">
        <name>Mg(2+)</name>
        <dbReference type="ChEBI" id="CHEBI:18420"/>
    </cofactor>
</comment>
<comment type="subunit">
    <text evidence="1">Homohexamer.</text>
</comment>
<comment type="domain">
    <text evidence="1">The Walker A ATP-binding motif also binds Pi and PPi.</text>
</comment>
<comment type="miscellaneous">
    <text evidence="1">Both phosphorylation and phosphorolysis are carried out by the same active site and suggest a common mechanism for both reactions.</text>
</comment>
<comment type="similarity">
    <text evidence="1">Belongs to the HPrK/P family.</text>
</comment>
<name>HPRK_LACP7</name>
<keyword id="KW-0067">ATP-binding</keyword>
<keyword id="KW-0119">Carbohydrate metabolism</keyword>
<keyword id="KW-0418">Kinase</keyword>
<keyword id="KW-0460">Magnesium</keyword>
<keyword id="KW-0479">Metal-binding</keyword>
<keyword id="KW-0511">Multifunctional enzyme</keyword>
<keyword id="KW-0547">Nucleotide-binding</keyword>
<keyword id="KW-1185">Reference proteome</keyword>
<keyword id="KW-0723">Serine/threonine-protein kinase</keyword>
<keyword id="KW-0808">Transferase</keyword>
<reference key="1">
    <citation type="submission" date="2007-11" db="EMBL/GenBank/DDBJ databases">
        <title>Complete genome sequence of Clostridium phytofermentans ISDg.</title>
        <authorList>
            <person name="Leschine S.B."/>
            <person name="Warnick T.A."/>
            <person name="Blanchard J.L."/>
            <person name="Schnell D.J."/>
            <person name="Petit E.L."/>
            <person name="LaTouf W.G."/>
            <person name="Copeland A."/>
            <person name="Lucas S."/>
            <person name="Lapidus A."/>
            <person name="Barry K."/>
            <person name="Glavina del Rio T."/>
            <person name="Dalin E."/>
            <person name="Tice H."/>
            <person name="Pitluck S."/>
            <person name="Kiss H."/>
            <person name="Brettin T."/>
            <person name="Bruce D."/>
            <person name="Detter J.C."/>
            <person name="Han C."/>
            <person name="Kuske C."/>
            <person name="Schmutz J."/>
            <person name="Larimer F."/>
            <person name="Land M."/>
            <person name="Hauser L."/>
            <person name="Kyrpides N."/>
            <person name="Kim E.A."/>
            <person name="Richardson P."/>
        </authorList>
    </citation>
    <scope>NUCLEOTIDE SEQUENCE [LARGE SCALE GENOMIC DNA]</scope>
    <source>
        <strain>ATCC 700394 / DSM 18823 / ISDg</strain>
    </source>
</reference>
<gene>
    <name evidence="1" type="primary">hprK</name>
    <name type="ordered locus">Cphy_0328</name>
</gene>